<reference key="1">
    <citation type="journal article" date="1985" name="Virology">
        <title>The neuraminidases of the virulent and avirulent A/Chicken/Pennsylvania/83 (H5N2) influenza A viruses: sequence and antigenic analyses.</title>
        <authorList>
            <person name="Deshpande K.L."/>
            <person name="Naeve C.W."/>
            <person name="Webster R.G."/>
        </authorList>
    </citation>
    <scope>NUCLEOTIDE SEQUENCE [GENOMIC RNA]</scope>
</reference>
<reference key="2">
    <citation type="journal article" date="2006" name="Science">
        <title>Large-scale sequence analysis of avian influenza isolates.</title>
        <authorList>
            <person name="Obenauer J.C."/>
            <person name="Denson J."/>
            <person name="Mehta P.K."/>
            <person name="Su X."/>
            <person name="Mukatira S."/>
            <person name="Finkelstein D.B."/>
            <person name="Xu X."/>
            <person name="Wang J."/>
            <person name="Ma J."/>
            <person name="Fan Y."/>
            <person name="Rakestraw K.M."/>
            <person name="Webster R.G."/>
            <person name="Hoffmann E."/>
            <person name="Krauss S."/>
            <person name="Zheng J."/>
            <person name="Zhang Z."/>
            <person name="Naeve C.W."/>
        </authorList>
    </citation>
    <scope>NUCLEOTIDE SEQUENCE [GENOMIC RNA]</scope>
</reference>
<reference key="3">
    <citation type="journal article" date="2004" name="Virus Res.">
        <title>Assembly and budding of influenza virus.</title>
        <authorList>
            <person name="Nayak D.P."/>
            <person name="Hui E.K."/>
            <person name="Barman S."/>
        </authorList>
    </citation>
    <scope>REVIEW</scope>
</reference>
<reference key="4">
    <citation type="journal article" date="2005" name="N. Engl. J. Med.">
        <title>Neuraminidase inhibitors for influenza.</title>
        <authorList>
            <person name="Moscona A."/>
        </authorList>
    </citation>
    <scope>REVIEW</scope>
</reference>
<reference key="5">
    <citation type="journal article" date="2005" name="Biol. Pharm. Bull.">
        <title>Sialobiology of influenza: molecular mechanism of host range variation of influenza viruses.</title>
        <authorList>
            <person name="Suzuki Y."/>
        </authorList>
    </citation>
    <scope>REVIEW</scope>
</reference>
<comment type="function">
    <text evidence="1">Catalyzes the removal of terminal sialic acid residues from viral and cellular glycoconjugates. Cleaves off the terminal sialic acids on the glycosylated HA during virus budding to facilitate virus release. Additionally helps virus spread through the circulation by further removing sialic acids from the cell surface. These cleavages prevent self-aggregation and ensure the efficient spread of the progeny virus from cell to cell. Otherwise, infection would be limited to one round of replication. Described as a receptor-destroying enzyme because it cleaves a terminal sialic acid from the cellular receptors. May facilitate viral invasion of the upper airways by cleaving the sialic acid moieties on the mucin of the airway epithelial cells. Likely to plays a role in the budding process through its association with lipid rafts during intracellular transport. May additionally display a raft-association independent effect on budding. Plays a role in the determination of host range restriction on replication and virulence. Sialidase activity in late endosome/lysosome traffic seems to enhance virus replication.</text>
</comment>
<comment type="catalytic activity">
    <reaction evidence="1">
        <text>Hydrolysis of alpha-(2-&gt;3)-, alpha-(2-&gt;6)-, alpha-(2-&gt;8)- glycosidic linkages of terminal sialic acid residues in oligosaccharides, glycoproteins, glycolipids, colominic acid and synthetic substrates.</text>
        <dbReference type="EC" id="3.2.1.18"/>
    </reaction>
</comment>
<comment type="cofactor">
    <cofactor evidence="1">
        <name>Ca(2+)</name>
        <dbReference type="ChEBI" id="CHEBI:29108"/>
    </cofactor>
</comment>
<comment type="activity regulation">
    <text evidence="1">Inhibited by the neuraminidase inhibitors zanamivir (Relenza) and oseltamivir (Tamiflu). These drugs interfere with the release of progeny virus from infected cells and are effective against all influenza strains. Resistance to neuraminidase inhibitors is quite rare.</text>
</comment>
<comment type="subunit">
    <text evidence="1">Homotetramer.</text>
</comment>
<comment type="subcellular location">
    <subcellularLocation>
        <location evidence="1">Virion membrane</location>
    </subcellularLocation>
    <subcellularLocation>
        <location evidence="1">Host apical cell membrane</location>
        <topology evidence="1">Single-pass type II membrane protein</topology>
    </subcellularLocation>
    <text evidence="1">Preferentially accumulates at the apical plasma membrane in infected polarized epithelial cells, which is the virus assembly site. Uses lipid rafts for cell surface transport and apical sorting. In the virion, forms a mushroom-shaped spike on the surface of the membrane.</text>
</comment>
<comment type="domain">
    <text evidence="1">Intact N-terminus is essential for virion morphogenesis. Possesses two apical sorting signals, one in the ectodomain, which is likely to be a glycan, and the other in the transmembrane domain. The transmembrane domain also plays a role in lipid raft association.</text>
</comment>
<comment type="PTM">
    <text evidence="1">N-glycosylated.</text>
</comment>
<comment type="miscellaneous">
    <text>The influenza A genome consist of 8 RNA segments. Genetic variation of hemagglutinin and/or neuraminidase genes results in the emergence of new influenza strains. The mechanism of variation can be the result of point mutations or the result of genetic reassortment between segments of two different strains.</text>
</comment>
<comment type="similarity">
    <text evidence="1">Belongs to the glycosyl hydrolase 34 family.</text>
</comment>
<feature type="chain" id="PRO_0000078680" description="Neuraminidase">
    <location>
        <begin position="1"/>
        <end position="449"/>
    </location>
</feature>
<feature type="topological domain" description="Intravirion" evidence="1">
    <location>
        <begin position="1"/>
        <end position="6"/>
    </location>
</feature>
<feature type="transmembrane region" description="Helical" evidence="1">
    <location>
        <begin position="7"/>
        <end position="29"/>
    </location>
</feature>
<feature type="topological domain" description="Virion surface" evidence="1">
    <location>
        <begin position="30"/>
        <end position="449"/>
    </location>
</feature>
<feature type="region of interest" description="Involved in apical transport and lipid raft association" evidence="1">
    <location>
        <begin position="11"/>
        <end position="33"/>
    </location>
</feature>
<feature type="region of interest" description="Hypervariable stalk region" evidence="1">
    <location>
        <begin position="36"/>
        <end position="68"/>
    </location>
</feature>
<feature type="region of interest" description="Head of neuraminidase" evidence="1">
    <location>
        <begin position="71"/>
        <end position="449"/>
    </location>
</feature>
<feature type="region of interest" description="Disordered" evidence="2">
    <location>
        <begin position="305"/>
        <end position="330"/>
    </location>
</feature>
<feature type="active site" description="Proton donor/acceptor" evidence="1">
    <location>
        <position position="131"/>
    </location>
</feature>
<feature type="active site" description="Nucleophile" evidence="1">
    <location>
        <position position="386"/>
    </location>
</feature>
<feature type="binding site" evidence="1">
    <location>
        <position position="98"/>
    </location>
    <ligand>
        <name>substrate</name>
    </ligand>
</feature>
<feature type="binding site" evidence="1">
    <location>
        <position position="132"/>
    </location>
    <ligand>
        <name>substrate</name>
    </ligand>
</feature>
<feature type="binding site" evidence="1">
    <location>
        <begin position="256"/>
        <end position="257"/>
    </location>
    <ligand>
        <name>substrate</name>
    </ligand>
</feature>
<feature type="binding site" evidence="1">
    <location>
        <position position="272"/>
    </location>
    <ligand>
        <name>substrate</name>
    </ligand>
</feature>
<feature type="binding site" evidence="1">
    <location>
        <position position="273"/>
    </location>
    <ligand>
        <name>Ca(2+)</name>
        <dbReference type="ChEBI" id="CHEBI:29108"/>
    </ligand>
</feature>
<feature type="binding site" evidence="1">
    <location>
        <position position="277"/>
    </location>
    <ligand>
        <name>Ca(2+)</name>
        <dbReference type="ChEBI" id="CHEBI:29108"/>
    </ligand>
</feature>
<feature type="binding site" evidence="1">
    <location>
        <position position="304"/>
    </location>
    <ligand>
        <name>Ca(2+)</name>
        <dbReference type="ChEBI" id="CHEBI:29108"/>
    </ligand>
</feature>
<feature type="binding site" evidence="1">
    <location>
        <position position="351"/>
    </location>
    <ligand>
        <name>substrate</name>
    </ligand>
</feature>
<feature type="glycosylation site" description="N-linked (GlcNAc...) asparagine; by host" evidence="1">
    <location>
        <position position="32"/>
    </location>
</feature>
<feature type="glycosylation site" description="N-linked (GlcNAc...) asparagine; by host" evidence="1">
    <location>
        <position position="48"/>
    </location>
</feature>
<feature type="glycosylation site" description="N-linked (GlcNAc...) asparagine; by host" evidence="1">
    <location>
        <position position="66"/>
    </location>
</feature>
<feature type="glycosylation site" description="N-linked (GlcNAc...) asparagine; by host" evidence="1">
    <location>
        <position position="123"/>
    </location>
</feature>
<feature type="glycosylation site" description="N-linked (GlcNAc...) asparagine; by host" evidence="1">
    <location>
        <position position="126"/>
    </location>
</feature>
<feature type="glycosylation site" description="N-linked (GlcNAc...) asparagine; by host" evidence="1">
    <location>
        <position position="180"/>
    </location>
</feature>
<feature type="glycosylation site" description="N-linked (GlcNAc...) asparagine; by host" evidence="1">
    <location>
        <position position="214"/>
    </location>
</feature>
<feature type="glycosylation site" description="N-linked (GlcNAc...) asparagine; by host" evidence="1">
    <location>
        <position position="382"/>
    </location>
</feature>
<feature type="disulfide bond" evidence="1">
    <location>
        <begin position="72"/>
        <end position="397"/>
    </location>
</feature>
<feature type="disulfide bond" evidence="1">
    <location>
        <begin position="104"/>
        <end position="109"/>
    </location>
</feature>
<feature type="disulfide bond" evidence="1">
    <location>
        <begin position="163"/>
        <end position="210"/>
    </location>
</feature>
<feature type="disulfide bond" evidence="1">
    <location>
        <begin position="212"/>
        <end position="217"/>
    </location>
</feature>
<feature type="disulfide bond" evidence="1">
    <location>
        <begin position="258"/>
        <end position="271"/>
    </location>
</feature>
<feature type="disulfide bond" evidence="1">
    <location>
        <begin position="260"/>
        <end position="269"/>
    </location>
</feature>
<feature type="disulfide bond" evidence="1">
    <location>
        <begin position="298"/>
        <end position="317"/>
    </location>
</feature>
<feature type="disulfide bond" evidence="1">
    <location>
        <begin position="401"/>
        <end position="427"/>
    </location>
</feature>
<feature type="sequence conflict" description="In Ref. 1; AAA43424." ref="1">
    <original>R</original>
    <variation>G</variation>
    <location>
        <position position="42"/>
    </location>
</feature>
<feature type="sequence conflict" description="In Ref. 1; AAA43424." ref="1">
    <original>N</original>
    <variation>H</variation>
    <location>
        <position position="122"/>
    </location>
</feature>
<feature type="sequence conflict" description="In Ref. 1; AAA43424." ref="1">
    <original>S</original>
    <variation>R</variation>
    <location>
        <position position="160"/>
    </location>
</feature>
<feature type="sequence conflict" description="In Ref. 1; AAA43424." ref="1">
    <original>I</original>
    <variation>T</variation>
    <location>
        <position position="232"/>
    </location>
</feature>
<feature type="sequence conflict" description="In Ref. 1; AAA43424." ref="1">
    <original>RYP</original>
    <variation>KSYL</variation>
    <location>
        <begin position="263"/>
        <end position="265"/>
    </location>
</feature>
<feature type="sequence conflict" description="In Ref. 1; AAA43424." ref="1">
    <original>I</original>
    <variation>KL</variation>
    <location>
        <position position="283"/>
    </location>
</feature>
<feature type="sequence conflict" description="In Ref. 1; AAA43424." ref="1">
    <original>G</original>
    <variation>S</variation>
    <location>
        <position position="361"/>
    </location>
</feature>
<feature type="sequence conflict" description="In Ref. 1; AAA43424." ref="1">
    <original>S</original>
    <variation>T</variation>
    <location>
        <position position="420"/>
    </location>
</feature>
<sequence>MNPNQKIITIGSVSLTIATVCFLMQIAILATNVTLHFRQNERSIPAYNQTTPCKPIIIERNIKYRNWSKPQCQITGFAPFSKDNSIRLSAGGGIWVTREPYVSCDPSKCYQFALGQGTTLDNNHSNGTIHDRTPHRTLLMNELGVPFHLGTRQVCIAWSSSSCHDGKAWLHVCVTGDDRNATASFIYNGMLVDSIGSWSQNILRTQESECVCINGTCTVVMTDGSASGKADIRILFIREGKIVHISPLSGSAQHIEECSCYPRYPNVRCVCRDNWKGSNRPVIDINMADYSIDSSYVCSGLVGDTPRNDDSSSSSNCRDPNNERGNPGVKGWAFDIGDDVWMGRTISKDSRSGYETFRVIGGWATANSKSQTNRQVIVDNNNWSGYSGIFSVESKSCINRCFYVELIRGRPQETRVWWTSNSIVVFCGTSGTYGTGSWPDGANINFMPL</sequence>
<organismHost>
    <name type="scientific">Aves</name>
    <dbReference type="NCBI Taxonomy" id="8782"/>
</organismHost>
<gene>
    <name evidence="1" type="primary">NA</name>
</gene>
<evidence type="ECO:0000255" key="1">
    <source>
        <dbReference type="HAMAP-Rule" id="MF_04071"/>
    </source>
</evidence>
<evidence type="ECO:0000256" key="2">
    <source>
        <dbReference type="SAM" id="MobiDB-lite"/>
    </source>
</evidence>
<name>NRAM_I83A6</name>
<accession>P09573</accession>
<accession>Q0A2D4</accession>
<proteinExistence type="inferred from homology"/>
<keyword id="KW-0106">Calcium</keyword>
<keyword id="KW-1015">Disulfide bond</keyword>
<keyword id="KW-0325">Glycoprotein</keyword>
<keyword id="KW-0326">Glycosidase</keyword>
<keyword id="KW-1032">Host cell membrane</keyword>
<keyword id="KW-1043">Host membrane</keyword>
<keyword id="KW-0378">Hydrolase</keyword>
<keyword id="KW-0472">Membrane</keyword>
<keyword id="KW-0479">Metal-binding</keyword>
<keyword id="KW-0735">Signal-anchor</keyword>
<keyword id="KW-0812">Transmembrane</keyword>
<keyword id="KW-1133">Transmembrane helix</keyword>
<keyword id="KW-0946">Virion</keyword>
<organism>
    <name type="scientific">Influenza A virus (strain A/Chicken/Pennsylvania/1370/1983 H5N2)</name>
    <dbReference type="NCBI Taxonomy" id="385617"/>
    <lineage>
        <taxon>Viruses</taxon>
        <taxon>Riboviria</taxon>
        <taxon>Orthornavirae</taxon>
        <taxon>Negarnaviricota</taxon>
        <taxon>Polyploviricotina</taxon>
        <taxon>Insthoviricetes</taxon>
        <taxon>Articulavirales</taxon>
        <taxon>Orthomyxoviridae</taxon>
        <taxon>Alphainfluenzavirus</taxon>
        <taxon>Alphainfluenzavirus influenzae</taxon>
        <taxon>Influenza A virus</taxon>
    </lineage>
</organism>
<protein>
    <recommendedName>
        <fullName evidence="1">Neuraminidase</fullName>
        <ecNumber evidence="1">3.2.1.18</ecNumber>
    </recommendedName>
</protein>
<dbReference type="EC" id="3.2.1.18" evidence="1"/>
<dbReference type="EMBL" id="M12051">
    <property type="protein sequence ID" value="AAA43424.1"/>
    <property type="molecule type" value="Genomic_RNA"/>
</dbReference>
<dbReference type="EMBL" id="CY015110">
    <property type="protein sequence ID" value="ABI85148.1"/>
    <property type="molecule type" value="Genomic_RNA"/>
</dbReference>
<dbReference type="SMR" id="P09573"/>
<dbReference type="CAZy" id="GH34">
    <property type="family name" value="Glycoside Hydrolase Family 34"/>
</dbReference>
<dbReference type="GlyCosmos" id="P09573">
    <property type="glycosylation" value="8 sites, No reported glycans"/>
</dbReference>
<dbReference type="Proteomes" id="UP000105783">
    <property type="component" value="Genome"/>
</dbReference>
<dbReference type="GO" id="GO:0020002">
    <property type="term" value="C:host cell plasma membrane"/>
    <property type="evidence" value="ECO:0007669"/>
    <property type="project" value="UniProtKB-SubCell"/>
</dbReference>
<dbReference type="GO" id="GO:0016020">
    <property type="term" value="C:membrane"/>
    <property type="evidence" value="ECO:0007669"/>
    <property type="project" value="UniProtKB-UniRule"/>
</dbReference>
<dbReference type="GO" id="GO:0055036">
    <property type="term" value="C:virion membrane"/>
    <property type="evidence" value="ECO:0007669"/>
    <property type="project" value="UniProtKB-SubCell"/>
</dbReference>
<dbReference type="GO" id="GO:0004308">
    <property type="term" value="F:exo-alpha-sialidase activity"/>
    <property type="evidence" value="ECO:0007669"/>
    <property type="project" value="UniProtKB-UniRule"/>
</dbReference>
<dbReference type="GO" id="GO:0046872">
    <property type="term" value="F:metal ion binding"/>
    <property type="evidence" value="ECO:0007669"/>
    <property type="project" value="UniProtKB-UniRule"/>
</dbReference>
<dbReference type="GO" id="GO:0005975">
    <property type="term" value="P:carbohydrate metabolic process"/>
    <property type="evidence" value="ECO:0007669"/>
    <property type="project" value="InterPro"/>
</dbReference>
<dbReference type="GO" id="GO:0046761">
    <property type="term" value="P:viral budding from plasma membrane"/>
    <property type="evidence" value="ECO:0007669"/>
    <property type="project" value="UniProtKB-UniRule"/>
</dbReference>
<dbReference type="CDD" id="cd15483">
    <property type="entry name" value="Influenza_NA"/>
    <property type="match status" value="1"/>
</dbReference>
<dbReference type="Gene3D" id="2.120.10.10">
    <property type="match status" value="1"/>
</dbReference>
<dbReference type="HAMAP" id="MF_04071">
    <property type="entry name" value="INFV_NRAM"/>
    <property type="match status" value="1"/>
</dbReference>
<dbReference type="InterPro" id="IPR001860">
    <property type="entry name" value="Glyco_hydro_34"/>
</dbReference>
<dbReference type="InterPro" id="IPR033654">
    <property type="entry name" value="Sialidase_Influenza_A/B"/>
</dbReference>
<dbReference type="InterPro" id="IPR036278">
    <property type="entry name" value="Sialidase_sf"/>
</dbReference>
<dbReference type="Pfam" id="PF00064">
    <property type="entry name" value="Neur"/>
    <property type="match status" value="1"/>
</dbReference>
<dbReference type="SUPFAM" id="SSF50939">
    <property type="entry name" value="Sialidases"/>
    <property type="match status" value="1"/>
</dbReference>